<feature type="chain" id="PRO_0000317531" description="Phospholipid phosphatase-related protein type 3">
    <location>
        <begin position="1"/>
        <end position="716"/>
    </location>
</feature>
<feature type="transmembrane region" description="Helical" evidence="4">
    <location>
        <begin position="18"/>
        <end position="38"/>
    </location>
</feature>
<feature type="transmembrane region" description="Helical" evidence="4">
    <location>
        <begin position="70"/>
        <end position="90"/>
    </location>
</feature>
<feature type="transmembrane region" description="Helical" evidence="4">
    <location>
        <begin position="131"/>
        <end position="151"/>
    </location>
</feature>
<feature type="transmembrane region" description="Helical" evidence="4">
    <location>
        <begin position="205"/>
        <end position="225"/>
    </location>
</feature>
<feature type="transmembrane region" description="Helical" evidence="4">
    <location>
        <begin position="231"/>
        <end position="251"/>
    </location>
</feature>
<feature type="transmembrane region" description="Helical" evidence="4">
    <location>
        <begin position="261"/>
        <end position="281"/>
    </location>
</feature>
<feature type="region of interest" description="Disordered" evidence="5">
    <location>
        <begin position="311"/>
        <end position="334"/>
    </location>
</feature>
<feature type="region of interest" description="Disordered" evidence="5">
    <location>
        <begin position="416"/>
        <end position="488"/>
    </location>
</feature>
<feature type="region of interest" description="Disordered" evidence="5">
    <location>
        <begin position="548"/>
        <end position="589"/>
    </location>
</feature>
<feature type="region of interest" description="Disordered" evidence="5">
    <location>
        <begin position="664"/>
        <end position="694"/>
    </location>
</feature>
<feature type="compositionally biased region" description="Polar residues" evidence="5">
    <location>
        <begin position="312"/>
        <end position="321"/>
    </location>
</feature>
<feature type="compositionally biased region" description="Acidic residues" evidence="5">
    <location>
        <begin position="437"/>
        <end position="460"/>
    </location>
</feature>
<feature type="compositionally biased region" description="Low complexity" evidence="5">
    <location>
        <begin position="562"/>
        <end position="575"/>
    </location>
</feature>
<feature type="modified residue" description="Phosphoserine" evidence="3">
    <location>
        <position position="320"/>
    </location>
</feature>
<feature type="modified residue" description="Phosphoserine" evidence="3">
    <location>
        <position position="351"/>
    </location>
</feature>
<feature type="modified residue" description="Phosphothreonine" evidence="3">
    <location>
        <position position="374"/>
    </location>
</feature>
<feature type="modified residue" description="Phosphoserine" evidence="3">
    <location>
        <position position="426"/>
    </location>
</feature>
<feature type="modified residue" description="Phosphoserine" evidence="3">
    <location>
        <position position="506"/>
    </location>
</feature>
<feature type="modified residue" description="Phosphoserine" evidence="3">
    <location>
        <position position="641"/>
    </location>
</feature>
<feature type="glycosylation site" description="N-linked (GlcNAc...) asparagine" evidence="4">
    <location>
        <position position="167"/>
    </location>
</feature>
<feature type="glycosylation site" description="N-linked (GlcNAc...) asparagine" evidence="4">
    <location>
        <position position="316"/>
    </location>
</feature>
<keyword id="KW-0325">Glycoprotein</keyword>
<keyword id="KW-0472">Membrane</keyword>
<keyword id="KW-0597">Phosphoprotein</keyword>
<keyword id="KW-1185">Reference proteome</keyword>
<keyword id="KW-0812">Transmembrane</keyword>
<keyword id="KW-1133">Transmembrane helix</keyword>
<comment type="subcellular location">
    <subcellularLocation>
        <location evidence="7">Membrane</location>
        <topology evidence="7">Multi-pass membrane protein</topology>
    </subcellularLocation>
</comment>
<comment type="similarity">
    <text evidence="7">Belongs to the PA-phosphatase related phosphoesterase family.</text>
</comment>
<comment type="caution">
    <text evidence="2">Has most probably no phospholipid phosphatase activity (By similarity). This is supported by the fact that the phosphatase sequence motifs as well as the His residue acting as a nucleophile in active phosphatases of the PA-phosphatase related phosphoesterase family are not conserved (By similarity).</text>
</comment>
<evidence type="ECO:0000250" key="1">
    <source>
        <dbReference type="UniProtKB" id="Q6T4P5"/>
    </source>
</evidence>
<evidence type="ECO:0000250" key="2">
    <source>
        <dbReference type="UniProtKB" id="Q6WAY2"/>
    </source>
</evidence>
<evidence type="ECO:0000250" key="3">
    <source>
        <dbReference type="UniProtKB" id="Q7TPB0"/>
    </source>
</evidence>
<evidence type="ECO:0000255" key="4"/>
<evidence type="ECO:0000256" key="5">
    <source>
        <dbReference type="SAM" id="MobiDB-lite"/>
    </source>
</evidence>
<evidence type="ECO:0000303" key="6">
    <source>
    </source>
</evidence>
<evidence type="ECO:0000305" key="7"/>
<evidence type="ECO:0000305" key="8">
    <source>
    </source>
</evidence>
<evidence type="ECO:0000312" key="9">
    <source>
        <dbReference type="RGD" id="727823"/>
    </source>
</evidence>
<name>PLPR3_RAT</name>
<accession>Q7TMB0</accession>
<reference key="1">
    <citation type="journal article" date="2003" name="Nat. Neurosci.">
        <title>A new phospholipid phosphatase, PRG-1, is involved in axon growth and regenerative sprouting.</title>
        <authorList>
            <person name="Braeuer A.U."/>
            <person name="Savaskan N.E."/>
            <person name="Kuehn H."/>
            <person name="Prehn S."/>
            <person name="Ninnemann O."/>
            <person name="Nitsch R."/>
        </authorList>
    </citation>
    <scope>NUCLEOTIDE SEQUENCE [MRNA]</scope>
    <source>
        <strain>Sprague-Dawley</strain>
        <strain>Wistar</strain>
        <tissue>Brain</tissue>
    </source>
</reference>
<organism>
    <name type="scientific">Rattus norvegicus</name>
    <name type="common">Rat</name>
    <dbReference type="NCBI Taxonomy" id="10116"/>
    <lineage>
        <taxon>Eukaryota</taxon>
        <taxon>Metazoa</taxon>
        <taxon>Chordata</taxon>
        <taxon>Craniata</taxon>
        <taxon>Vertebrata</taxon>
        <taxon>Euteleostomi</taxon>
        <taxon>Mammalia</taxon>
        <taxon>Eutheria</taxon>
        <taxon>Euarchontoglires</taxon>
        <taxon>Glires</taxon>
        <taxon>Rodentia</taxon>
        <taxon>Myomorpha</taxon>
        <taxon>Muroidea</taxon>
        <taxon>Muridae</taxon>
        <taxon>Murinae</taxon>
        <taxon>Rattus</taxon>
    </lineage>
</organism>
<sequence>MIAKKEKNKTPKDSMTLLPCFYFVELPIVASSVVSLYFLELTDLFQPAKVGFQCHDRSLSMPYVETNEELIPLLMLLSLAFAAPAASIMVGEGMVYCLQSRLWGRGPGGVEGSINAGGCNFNSFLRRTVRFVGVHVFGLCATALVTDVIQLATGYHTPFFLTVCKPNYTLLGTSCEANPYITQDICSGHDTHAILSARKTFPSQHATLSAFAAVYVSMYFNSVISDATKLLKPILVFAFAIAAGVCGLTQITQYRSHPVDVYAGFLIGAGIAAYLACHAVGNFQAPPAEKVPTPAPAKDALRVLTQRGHESMYQQNKSVSTDELGPPGRLEGVPRPVAREKTSLGSLKRASVDVDLLAPRSPMGKEGMVTFSNTLPRVSTPSLDDPSRRHMTIHVPLDASRSRQLISEWKQKSLEGRGLGLPDEASPAHLRAPAEQVAEEEEEEEEEEEEEEEEEEEEEGPVPPSLYPTVQARPGLGPRVILPPRPGPQPLIHIPEEVVQAGAGLSPKSSASVRAKWLSMVEKGGGPVAVAPPQPRVANPPRLLQVIAMSKAAGGPKAETASSSSASSDSSQYRSPSDRDSASIVTIDAHAPHHPVVHLSAGSTPWEWKAKVVEGEGGYELGDLARGFRSSCKQPGIGPGSPVSDVDQEEPRFGAVATVNLATGEGLPPPGASEGALGAGSRESTLRRQVGALGEREVEAEAESYYRRMQARRYQD</sequence>
<proteinExistence type="evidence at transcript level"/>
<dbReference type="EMBL" id="AY147866">
    <property type="protein sequence ID" value="AAN37411.1"/>
    <property type="molecule type" value="mRNA"/>
</dbReference>
<dbReference type="EMBL" id="AY300027">
    <property type="protein sequence ID" value="AAP57099.1"/>
    <property type="molecule type" value="mRNA"/>
</dbReference>
<dbReference type="FunCoup" id="Q7TMB0">
    <property type="interactions" value="129"/>
</dbReference>
<dbReference type="STRING" id="10116.ENSRNOP00000029601"/>
<dbReference type="GlyCosmos" id="Q7TMB0">
    <property type="glycosylation" value="2 sites, No reported glycans"/>
</dbReference>
<dbReference type="GlyGen" id="Q7TMB0">
    <property type="glycosylation" value="3 sites"/>
</dbReference>
<dbReference type="iPTMnet" id="Q7TMB0"/>
<dbReference type="PhosphoSitePlus" id="Q7TMB0"/>
<dbReference type="SwissPalm" id="Q7TMB0"/>
<dbReference type="PaxDb" id="10116-ENSRNOP00000029601"/>
<dbReference type="UCSC" id="RGD:727823">
    <property type="organism name" value="rat"/>
</dbReference>
<dbReference type="AGR" id="RGD:727823"/>
<dbReference type="RGD" id="727823">
    <property type="gene designation" value="Plppr3"/>
</dbReference>
<dbReference type="eggNOG" id="KOG3030">
    <property type="taxonomic scope" value="Eukaryota"/>
</dbReference>
<dbReference type="InParanoid" id="Q7TMB0"/>
<dbReference type="PhylomeDB" id="Q7TMB0"/>
<dbReference type="Reactome" id="R-RNO-419408">
    <property type="pathway name" value="Lysosphingolipid and LPA receptors"/>
</dbReference>
<dbReference type="PRO" id="PR:Q7TMB0"/>
<dbReference type="Proteomes" id="UP000002494">
    <property type="component" value="Unplaced"/>
</dbReference>
<dbReference type="GO" id="GO:0005886">
    <property type="term" value="C:plasma membrane"/>
    <property type="evidence" value="ECO:0000318"/>
    <property type="project" value="GO_Central"/>
</dbReference>
<dbReference type="GO" id="GO:0008195">
    <property type="term" value="F:phosphatidate phosphatase activity"/>
    <property type="evidence" value="ECO:0000318"/>
    <property type="project" value="GO_Central"/>
</dbReference>
<dbReference type="GO" id="GO:0046839">
    <property type="term" value="P:phospholipid dephosphorylation"/>
    <property type="evidence" value="ECO:0000318"/>
    <property type="project" value="GO_Central"/>
</dbReference>
<dbReference type="GO" id="GO:0006644">
    <property type="term" value="P:phospholipid metabolic process"/>
    <property type="evidence" value="ECO:0000318"/>
    <property type="project" value="GO_Central"/>
</dbReference>
<dbReference type="GO" id="GO:0007165">
    <property type="term" value="P:signal transduction"/>
    <property type="evidence" value="ECO:0000318"/>
    <property type="project" value="GO_Central"/>
</dbReference>
<dbReference type="CDD" id="cd03384">
    <property type="entry name" value="PAP2_wunen"/>
    <property type="match status" value="1"/>
</dbReference>
<dbReference type="FunFam" id="1.20.144.10:FF:000014">
    <property type="entry name" value="Phospholipid phosphatase-related protein type 3"/>
    <property type="match status" value="1"/>
</dbReference>
<dbReference type="Gene3D" id="1.20.144.10">
    <property type="entry name" value="Phosphatidic acid phosphatase type 2/haloperoxidase"/>
    <property type="match status" value="1"/>
</dbReference>
<dbReference type="InterPro" id="IPR036938">
    <property type="entry name" value="P_Acid_Pase_2/haloperoxi_sf"/>
</dbReference>
<dbReference type="InterPro" id="IPR000326">
    <property type="entry name" value="P_Acid_Pase_2/haloperoxidase"/>
</dbReference>
<dbReference type="InterPro" id="IPR043216">
    <property type="entry name" value="PA_PP_rel"/>
</dbReference>
<dbReference type="PANTHER" id="PTHR10165">
    <property type="entry name" value="LIPID PHOSPHATE PHOSPHATASE"/>
    <property type="match status" value="1"/>
</dbReference>
<dbReference type="PANTHER" id="PTHR10165:SF14">
    <property type="entry name" value="PHOSPHOLIPID PHOSPHATASE-RELATED PROTEIN TYPE 3"/>
    <property type="match status" value="1"/>
</dbReference>
<dbReference type="Pfam" id="PF01569">
    <property type="entry name" value="PAP2"/>
    <property type="match status" value="1"/>
</dbReference>
<dbReference type="SMART" id="SM00014">
    <property type="entry name" value="acidPPc"/>
    <property type="match status" value="1"/>
</dbReference>
<dbReference type="SUPFAM" id="SSF48317">
    <property type="entry name" value="Acid phosphatase/Vanadium-dependent haloperoxidase"/>
    <property type="match status" value="1"/>
</dbReference>
<gene>
    <name evidence="9" type="primary">Plppr3</name>
    <name evidence="1" type="synonym">Lppr3</name>
    <name evidence="1" type="synonym">Prg2</name>
</gene>
<protein>
    <recommendedName>
        <fullName evidence="1">Phospholipid phosphatase-related protein type 3</fullName>
    </recommendedName>
    <alternativeName>
        <fullName evidence="2">Inactive phospholipid phosphatase PLPPR3</fullName>
    </alternativeName>
    <alternativeName>
        <fullName evidence="1">Lipid phosphate phosphatase-related protein type 3</fullName>
    </alternativeName>
    <alternativeName>
        <fullName evidence="8">Plasticity-related gene 2 protein</fullName>
        <shortName evidence="6">PRG-2</shortName>
    </alternativeName>
</protein>